<dbReference type="EMBL" id="EF115541">
    <property type="protein sequence ID" value="ABK79402.1"/>
    <property type="molecule type" value="Genomic_DNA"/>
</dbReference>
<dbReference type="RefSeq" id="YP_010144414.1">
    <property type="nucleotide sequence ID" value="NC_056985.1"/>
</dbReference>
<dbReference type="RefSeq" id="YP_874642.1">
    <property type="nucleotide sequence ID" value="NC_008590.1"/>
</dbReference>
<dbReference type="SMR" id="A1E9I0"/>
<dbReference type="GeneID" id="4525091"/>
<dbReference type="GeneID" id="67140661"/>
<dbReference type="GO" id="GO:0009535">
    <property type="term" value="C:chloroplast thylakoid membrane"/>
    <property type="evidence" value="ECO:0007669"/>
    <property type="project" value="UniProtKB-SubCell"/>
</dbReference>
<dbReference type="GO" id="GO:0009512">
    <property type="term" value="C:cytochrome b6f complex"/>
    <property type="evidence" value="ECO:0007669"/>
    <property type="project" value="InterPro"/>
</dbReference>
<dbReference type="GO" id="GO:0045158">
    <property type="term" value="F:electron transporter, transferring electrons within cytochrome b6/f complex of photosystem II activity"/>
    <property type="evidence" value="ECO:0007669"/>
    <property type="project" value="InterPro"/>
</dbReference>
<dbReference type="GO" id="GO:0017004">
    <property type="term" value="P:cytochrome complex assembly"/>
    <property type="evidence" value="ECO:0007669"/>
    <property type="project" value="UniProtKB-UniRule"/>
</dbReference>
<dbReference type="GO" id="GO:0015979">
    <property type="term" value="P:photosynthesis"/>
    <property type="evidence" value="ECO:0007669"/>
    <property type="project" value="UniProtKB-KW"/>
</dbReference>
<dbReference type="HAMAP" id="MF_00395">
    <property type="entry name" value="Cytb6_f_PetN"/>
    <property type="match status" value="1"/>
</dbReference>
<dbReference type="InterPro" id="IPR036143">
    <property type="entry name" value="Cytochr_b6-f_cplx_su8_sf"/>
</dbReference>
<dbReference type="InterPro" id="IPR005497">
    <property type="entry name" value="Cytochrome_b6-f_cplx_su8"/>
</dbReference>
<dbReference type="Pfam" id="PF03742">
    <property type="entry name" value="PetN"/>
    <property type="match status" value="1"/>
</dbReference>
<dbReference type="SUPFAM" id="SSF103451">
    <property type="entry name" value="PetN subunit of the cytochrome b6f complex"/>
    <property type="match status" value="1"/>
</dbReference>
<geneLocation type="chloroplast"/>
<sequence length="29" mass="3170">MDIVSLAWAALMVVFTFSLSLVVWGRSGL</sequence>
<protein>
    <recommendedName>
        <fullName evidence="1">Cytochrome b6-f complex subunit 8</fullName>
    </recommendedName>
    <alternativeName>
        <fullName evidence="1">Cytochrome b6-f complex subunit PetN</fullName>
    </alternativeName>
    <alternativeName>
        <fullName evidence="1">Cytochrome b6-f complex subunit VIII</fullName>
    </alternativeName>
</protein>
<gene>
    <name evidence="1" type="primary">petN</name>
</gene>
<name>PETN_HORVU</name>
<proteinExistence type="inferred from homology"/>
<organism>
    <name type="scientific">Hordeum vulgare</name>
    <name type="common">Barley</name>
    <dbReference type="NCBI Taxonomy" id="4513"/>
    <lineage>
        <taxon>Eukaryota</taxon>
        <taxon>Viridiplantae</taxon>
        <taxon>Streptophyta</taxon>
        <taxon>Embryophyta</taxon>
        <taxon>Tracheophyta</taxon>
        <taxon>Spermatophyta</taxon>
        <taxon>Magnoliopsida</taxon>
        <taxon>Liliopsida</taxon>
        <taxon>Poales</taxon>
        <taxon>Poaceae</taxon>
        <taxon>BOP clade</taxon>
        <taxon>Pooideae</taxon>
        <taxon>Triticodae</taxon>
        <taxon>Triticeae</taxon>
        <taxon>Hordeinae</taxon>
        <taxon>Hordeum</taxon>
    </lineage>
</organism>
<reference key="1">
    <citation type="journal article" date="2007" name="Theor. Appl. Genet.">
        <title>Complete chloroplast genome sequences of Hordeum vulgare, Sorghum bicolor and Agrostis stolonifera, and comparative analyses with other grass genomes.</title>
        <authorList>
            <person name="Saski C."/>
            <person name="Lee S.-B."/>
            <person name="Fjellheim S."/>
            <person name="Guda C."/>
            <person name="Jansen R.K."/>
            <person name="Luo H."/>
            <person name="Tomkins J."/>
            <person name="Rognli O.A."/>
            <person name="Daniell H."/>
            <person name="Clarke J.L."/>
        </authorList>
    </citation>
    <scope>NUCLEOTIDE SEQUENCE [LARGE SCALE GENOMIC DNA]</scope>
    <source>
        <strain>cv. Morex</strain>
    </source>
</reference>
<keyword id="KW-0150">Chloroplast</keyword>
<keyword id="KW-0249">Electron transport</keyword>
<keyword id="KW-0472">Membrane</keyword>
<keyword id="KW-0602">Photosynthesis</keyword>
<keyword id="KW-0934">Plastid</keyword>
<keyword id="KW-0793">Thylakoid</keyword>
<keyword id="KW-0812">Transmembrane</keyword>
<keyword id="KW-1133">Transmembrane helix</keyword>
<keyword id="KW-0813">Transport</keyword>
<evidence type="ECO:0000255" key="1">
    <source>
        <dbReference type="HAMAP-Rule" id="MF_00395"/>
    </source>
</evidence>
<comment type="function">
    <text evidence="1">Component of the cytochrome b6-f complex, which mediates electron transfer between photosystem II (PSII) and photosystem I (PSI), cyclic electron flow around PSI, and state transitions.</text>
</comment>
<comment type="subunit">
    <text evidence="1">The 4 large subunits of the cytochrome b6-f complex are cytochrome b6, subunit IV (17 kDa polypeptide, PetD), cytochrome f and the Rieske protein, while the 4 small subunits are PetG, PetL, PetM and PetN. The complex functions as a dimer.</text>
</comment>
<comment type="subcellular location">
    <subcellularLocation>
        <location evidence="1">Plastid</location>
        <location evidence="1">Chloroplast thylakoid membrane</location>
        <topology evidence="1">Single-pass membrane protein</topology>
    </subcellularLocation>
</comment>
<comment type="similarity">
    <text evidence="1">Belongs to the PetN family.</text>
</comment>
<accession>A1E9I0</accession>
<feature type="chain" id="PRO_0000355442" description="Cytochrome b6-f complex subunit 8">
    <location>
        <begin position="1"/>
        <end position="29"/>
    </location>
</feature>
<feature type="transmembrane region" description="Helical" evidence="1">
    <location>
        <begin position="3"/>
        <end position="23"/>
    </location>
</feature>